<keyword id="KW-1185">Reference proteome</keyword>
<keyword id="KW-0687">Ribonucleoprotein</keyword>
<keyword id="KW-0689">Ribosomal protein</keyword>
<keyword id="KW-0694">RNA-binding</keyword>
<keyword id="KW-0699">rRNA-binding</keyword>
<gene>
    <name evidence="1" type="primary">rpl3</name>
    <name type="ordered locus">HQ_2842A</name>
</gene>
<protein>
    <recommendedName>
        <fullName evidence="1">Large ribosomal subunit protein uL3</fullName>
    </recommendedName>
    <alternativeName>
        <fullName evidence="3">50S ribosomal protein L3</fullName>
    </alternativeName>
</protein>
<comment type="function">
    <text evidence="1">One of the primary rRNA binding proteins, it binds directly near the 3'-end of the 23S rRNA, where it nucleates assembly of the 50S subunit.</text>
</comment>
<comment type="subunit">
    <text evidence="1">Part of the 50S ribosomal subunit. Forms a cluster with proteins L14 and L24e.</text>
</comment>
<comment type="similarity">
    <text evidence="1">Belongs to the universal ribosomal protein uL3 family.</text>
</comment>
<reference key="1">
    <citation type="journal article" date="2006" name="BMC Genomics">
        <title>The genome of the square archaeon Haloquadratum walsbyi: life at the limits of water activity.</title>
        <authorList>
            <person name="Bolhuis H."/>
            <person name="Palm P."/>
            <person name="Wende A."/>
            <person name="Falb M."/>
            <person name="Rampp M."/>
            <person name="Rodriguez-Valera F."/>
            <person name="Pfeiffer F."/>
            <person name="Oesterhelt D."/>
        </authorList>
    </citation>
    <scope>NUCLEOTIDE SEQUENCE [LARGE SCALE GENOMIC DNA]</scope>
    <source>
        <strain>DSM 16790 / HBSQ001</strain>
    </source>
</reference>
<proteinExistence type="inferred from homology"/>
<evidence type="ECO:0000255" key="1">
    <source>
        <dbReference type="HAMAP-Rule" id="MF_01325"/>
    </source>
</evidence>
<evidence type="ECO:0000256" key="2">
    <source>
        <dbReference type="SAM" id="MobiDB-lite"/>
    </source>
</evidence>
<evidence type="ECO:0000305" key="3"/>
<organism>
    <name type="scientific">Haloquadratum walsbyi (strain DSM 16790 / HBSQ001)</name>
    <dbReference type="NCBI Taxonomy" id="362976"/>
    <lineage>
        <taxon>Archaea</taxon>
        <taxon>Methanobacteriati</taxon>
        <taxon>Methanobacteriota</taxon>
        <taxon>Stenosarchaea group</taxon>
        <taxon>Halobacteria</taxon>
        <taxon>Halobacteriales</taxon>
        <taxon>Haloferacaceae</taxon>
        <taxon>Haloquadratum</taxon>
    </lineage>
</organism>
<feature type="chain" id="PRO_0000353622" description="Large ribosomal subunit protein uL3">
    <location>
        <begin position="1"/>
        <end position="338"/>
    </location>
</feature>
<feature type="region of interest" description="Disordered" evidence="2">
    <location>
        <begin position="1"/>
        <end position="37"/>
    </location>
</feature>
<name>RL3_HALWD</name>
<sequence>MPQPSRPRKGSMGFSPRKRAESEVPRIRSWASNDGAPGVQGFAGYKAGMTQVLMVNDEANSPREGMEEAVPVTVVETPPMRAVALRAYEDTPYGSKPLTEVWGREFDTSLERTLDLPNEDTFEDDAAALRDDAETGDIDDVRLITHTLPAGMRNIPKKTPDVMETRVGGGTLTDRVEFGLDLISDGGEHEISDIFRAGEYLDAAGVTKGKGTQGPVKRFGVQKRKGKHARQGYRRRIGNLGPWNPSRVRSTVPQQGQTGYHQRTELNKRLIEIGNGDEPTVDGGFVGYGEVDGPYALIKGSLPGPDQRLLRFRTAVRPSDQPRLDPEVRYVSTASNQG</sequence>
<accession>Q18GE9</accession>
<dbReference type="EMBL" id="AM180088">
    <property type="protein sequence ID" value="CAJ52949.1"/>
    <property type="molecule type" value="Genomic_DNA"/>
</dbReference>
<dbReference type="RefSeq" id="WP_011572062.1">
    <property type="nucleotide sequence ID" value="NC_008212.1"/>
</dbReference>
<dbReference type="SMR" id="Q18GE9"/>
<dbReference type="STRING" id="362976.HQ_2842A"/>
<dbReference type="GeneID" id="4194617"/>
<dbReference type="KEGG" id="hwa:HQ_2842A"/>
<dbReference type="eggNOG" id="arCOG04070">
    <property type="taxonomic scope" value="Archaea"/>
</dbReference>
<dbReference type="HOGENOM" id="CLU_033361_2_0_2"/>
<dbReference type="Proteomes" id="UP000001975">
    <property type="component" value="Chromosome"/>
</dbReference>
<dbReference type="GO" id="GO:0022625">
    <property type="term" value="C:cytosolic large ribosomal subunit"/>
    <property type="evidence" value="ECO:0007669"/>
    <property type="project" value="TreeGrafter"/>
</dbReference>
<dbReference type="GO" id="GO:0019843">
    <property type="term" value="F:rRNA binding"/>
    <property type="evidence" value="ECO:0007669"/>
    <property type="project" value="UniProtKB-UniRule"/>
</dbReference>
<dbReference type="GO" id="GO:0003735">
    <property type="term" value="F:structural constituent of ribosome"/>
    <property type="evidence" value="ECO:0007669"/>
    <property type="project" value="InterPro"/>
</dbReference>
<dbReference type="GO" id="GO:0006412">
    <property type="term" value="P:translation"/>
    <property type="evidence" value="ECO:0007669"/>
    <property type="project" value="UniProtKB-UniRule"/>
</dbReference>
<dbReference type="Gene3D" id="3.30.1430.10">
    <property type="match status" value="1"/>
</dbReference>
<dbReference type="Gene3D" id="4.10.960.10">
    <property type="entry name" value="Ribosomal protein L3, domain 3"/>
    <property type="match status" value="1"/>
</dbReference>
<dbReference type="Gene3D" id="2.40.30.10">
    <property type="entry name" value="Translation factors"/>
    <property type="match status" value="1"/>
</dbReference>
<dbReference type="HAMAP" id="MF_01325_A">
    <property type="entry name" value="Ribosomal_uL3_A"/>
    <property type="match status" value="1"/>
</dbReference>
<dbReference type="InterPro" id="IPR045077">
    <property type="entry name" value="L3_arc_euk"/>
</dbReference>
<dbReference type="InterPro" id="IPR044892">
    <property type="entry name" value="Ribosomal_L3_dom_3_arc_sf"/>
</dbReference>
<dbReference type="InterPro" id="IPR000597">
    <property type="entry name" value="Ribosomal_uL3"/>
</dbReference>
<dbReference type="InterPro" id="IPR019928">
    <property type="entry name" value="Ribosomal_uL3_arc"/>
</dbReference>
<dbReference type="InterPro" id="IPR019926">
    <property type="entry name" value="Ribosomal_uL3_CS"/>
</dbReference>
<dbReference type="InterPro" id="IPR009000">
    <property type="entry name" value="Transl_B-barrel_sf"/>
</dbReference>
<dbReference type="NCBIfam" id="TIGR03626">
    <property type="entry name" value="L3_arch"/>
    <property type="match status" value="1"/>
</dbReference>
<dbReference type="NCBIfam" id="NF003261">
    <property type="entry name" value="PRK04231.1"/>
    <property type="match status" value="1"/>
</dbReference>
<dbReference type="PANTHER" id="PTHR11363">
    <property type="entry name" value="60S RIBOSOMAL PROTEIN L3-RELATED"/>
    <property type="match status" value="1"/>
</dbReference>
<dbReference type="PANTHER" id="PTHR11363:SF5">
    <property type="entry name" value="LARGE RIBOSOMAL SUBUNIT PROTEIN UL3"/>
    <property type="match status" value="1"/>
</dbReference>
<dbReference type="Pfam" id="PF00297">
    <property type="entry name" value="Ribosomal_L3"/>
    <property type="match status" value="1"/>
</dbReference>
<dbReference type="SUPFAM" id="SSF50447">
    <property type="entry name" value="Translation proteins"/>
    <property type="match status" value="1"/>
</dbReference>
<dbReference type="PROSITE" id="PS00474">
    <property type="entry name" value="RIBOSOMAL_L3"/>
    <property type="match status" value="1"/>
</dbReference>